<gene>
    <name evidence="1" type="primary">gatB</name>
    <name type="ordered locus">Hhal_1002</name>
</gene>
<sequence>MKWETVIGLEIHAQLATRTKIFSGAPTAYGAEPNTQACPVDLGLPGVLPVLNREVVRMAIKFGLAVDARIAPRSVFARKNYFYPDLPKGYQISQYDLPIVEGGHLDIELEDGASKRIGITRAHLEEDAGKSLHEDFHGMTGVDLNRAGTPLMEIVSEPDLRSPAEAAAYMKKLHALVRYLEICDGNMQEGSFRCDANVSVRPVGQEAFGTRAELKNLNSFRFVERALEYEVERQIDLLESGGEVVQETRLYDVDKGVTRSMRTKEEANDYRYFPEPDLLPVEVDAALVDEVRETLPELPDEKRRRFEEEYGLPAYDAGVLTATRDMADFFEHAVSESGGFAKRTANLLMSELLAYLNKDGLEIAESPVTPEMLGKLVARVEDETLSSRGAKDVFEAMWAGEGEPDEVIEKKGLKQVTDTSAIEALVDEAIANNPQQLEQYRAGKEKLFGFFVGQVMKASGGKANPQQVNELLKKKLDGS</sequence>
<reference key="1">
    <citation type="submission" date="2006-12" db="EMBL/GenBank/DDBJ databases">
        <title>Complete sequence of Halorhodospira halophila SL1.</title>
        <authorList>
            <consortium name="US DOE Joint Genome Institute"/>
            <person name="Copeland A."/>
            <person name="Lucas S."/>
            <person name="Lapidus A."/>
            <person name="Barry K."/>
            <person name="Detter J.C."/>
            <person name="Glavina del Rio T."/>
            <person name="Hammon N."/>
            <person name="Israni S."/>
            <person name="Dalin E."/>
            <person name="Tice H."/>
            <person name="Pitluck S."/>
            <person name="Saunders E."/>
            <person name="Brettin T."/>
            <person name="Bruce D."/>
            <person name="Han C."/>
            <person name="Tapia R."/>
            <person name="Schmutz J."/>
            <person name="Larimer F."/>
            <person name="Land M."/>
            <person name="Hauser L."/>
            <person name="Kyrpides N."/>
            <person name="Mikhailova N."/>
            <person name="Hoff W."/>
            <person name="Richardson P."/>
        </authorList>
    </citation>
    <scope>NUCLEOTIDE SEQUENCE [LARGE SCALE GENOMIC DNA]</scope>
    <source>
        <strain>DSM 244 / SL1</strain>
    </source>
</reference>
<feature type="chain" id="PRO_1000015972" description="Aspartyl/glutamyl-tRNA(Asn/Gln) amidotransferase subunit B">
    <location>
        <begin position="1"/>
        <end position="479"/>
    </location>
</feature>
<evidence type="ECO:0000255" key="1">
    <source>
        <dbReference type="HAMAP-Rule" id="MF_00121"/>
    </source>
</evidence>
<comment type="function">
    <text evidence="1">Allows the formation of correctly charged Asn-tRNA(Asn) or Gln-tRNA(Gln) through the transamidation of misacylated Asp-tRNA(Asn) or Glu-tRNA(Gln) in organisms which lack either or both of asparaginyl-tRNA or glutaminyl-tRNA synthetases. The reaction takes place in the presence of glutamine and ATP through an activated phospho-Asp-tRNA(Asn) or phospho-Glu-tRNA(Gln).</text>
</comment>
<comment type="catalytic activity">
    <reaction evidence="1">
        <text>L-glutamyl-tRNA(Gln) + L-glutamine + ATP + H2O = L-glutaminyl-tRNA(Gln) + L-glutamate + ADP + phosphate + H(+)</text>
        <dbReference type="Rhea" id="RHEA:17521"/>
        <dbReference type="Rhea" id="RHEA-COMP:9681"/>
        <dbReference type="Rhea" id="RHEA-COMP:9684"/>
        <dbReference type="ChEBI" id="CHEBI:15377"/>
        <dbReference type="ChEBI" id="CHEBI:15378"/>
        <dbReference type="ChEBI" id="CHEBI:29985"/>
        <dbReference type="ChEBI" id="CHEBI:30616"/>
        <dbReference type="ChEBI" id="CHEBI:43474"/>
        <dbReference type="ChEBI" id="CHEBI:58359"/>
        <dbReference type="ChEBI" id="CHEBI:78520"/>
        <dbReference type="ChEBI" id="CHEBI:78521"/>
        <dbReference type="ChEBI" id="CHEBI:456216"/>
    </reaction>
</comment>
<comment type="catalytic activity">
    <reaction evidence="1">
        <text>L-aspartyl-tRNA(Asn) + L-glutamine + ATP + H2O = L-asparaginyl-tRNA(Asn) + L-glutamate + ADP + phosphate + 2 H(+)</text>
        <dbReference type="Rhea" id="RHEA:14513"/>
        <dbReference type="Rhea" id="RHEA-COMP:9674"/>
        <dbReference type="Rhea" id="RHEA-COMP:9677"/>
        <dbReference type="ChEBI" id="CHEBI:15377"/>
        <dbReference type="ChEBI" id="CHEBI:15378"/>
        <dbReference type="ChEBI" id="CHEBI:29985"/>
        <dbReference type="ChEBI" id="CHEBI:30616"/>
        <dbReference type="ChEBI" id="CHEBI:43474"/>
        <dbReference type="ChEBI" id="CHEBI:58359"/>
        <dbReference type="ChEBI" id="CHEBI:78515"/>
        <dbReference type="ChEBI" id="CHEBI:78516"/>
        <dbReference type="ChEBI" id="CHEBI:456216"/>
    </reaction>
</comment>
<comment type="subunit">
    <text evidence="1">Heterotrimer of A, B and C subunits.</text>
</comment>
<comment type="similarity">
    <text evidence="1">Belongs to the GatB/GatE family. GatB subfamily.</text>
</comment>
<keyword id="KW-0067">ATP-binding</keyword>
<keyword id="KW-0436">Ligase</keyword>
<keyword id="KW-0547">Nucleotide-binding</keyword>
<keyword id="KW-0648">Protein biosynthesis</keyword>
<keyword id="KW-1185">Reference proteome</keyword>
<accession>A1WVR6</accession>
<dbReference type="EC" id="6.3.5.-" evidence="1"/>
<dbReference type="EMBL" id="CP000544">
    <property type="protein sequence ID" value="ABM61778.1"/>
    <property type="molecule type" value="Genomic_DNA"/>
</dbReference>
<dbReference type="RefSeq" id="WP_011813801.1">
    <property type="nucleotide sequence ID" value="NC_008789.1"/>
</dbReference>
<dbReference type="SMR" id="A1WVR6"/>
<dbReference type="STRING" id="349124.Hhal_1002"/>
<dbReference type="KEGG" id="hha:Hhal_1002"/>
<dbReference type="eggNOG" id="COG0064">
    <property type="taxonomic scope" value="Bacteria"/>
</dbReference>
<dbReference type="HOGENOM" id="CLU_019240_0_0_6"/>
<dbReference type="OrthoDB" id="9804078at2"/>
<dbReference type="Proteomes" id="UP000000647">
    <property type="component" value="Chromosome"/>
</dbReference>
<dbReference type="GO" id="GO:0050566">
    <property type="term" value="F:asparaginyl-tRNA synthase (glutamine-hydrolyzing) activity"/>
    <property type="evidence" value="ECO:0007669"/>
    <property type="project" value="RHEA"/>
</dbReference>
<dbReference type="GO" id="GO:0005524">
    <property type="term" value="F:ATP binding"/>
    <property type="evidence" value="ECO:0007669"/>
    <property type="project" value="UniProtKB-KW"/>
</dbReference>
<dbReference type="GO" id="GO:0050567">
    <property type="term" value="F:glutaminyl-tRNA synthase (glutamine-hydrolyzing) activity"/>
    <property type="evidence" value="ECO:0007669"/>
    <property type="project" value="UniProtKB-UniRule"/>
</dbReference>
<dbReference type="GO" id="GO:0070681">
    <property type="term" value="P:glutaminyl-tRNAGln biosynthesis via transamidation"/>
    <property type="evidence" value="ECO:0007669"/>
    <property type="project" value="TreeGrafter"/>
</dbReference>
<dbReference type="GO" id="GO:0006412">
    <property type="term" value="P:translation"/>
    <property type="evidence" value="ECO:0007669"/>
    <property type="project" value="UniProtKB-UniRule"/>
</dbReference>
<dbReference type="FunFam" id="1.10.10.410:FF:000001">
    <property type="entry name" value="Aspartyl/glutamyl-tRNA(Asn/Gln) amidotransferase subunit B"/>
    <property type="match status" value="1"/>
</dbReference>
<dbReference type="FunFam" id="1.10.150.380:FF:000001">
    <property type="entry name" value="Aspartyl/glutamyl-tRNA(Asn/Gln) amidotransferase subunit B"/>
    <property type="match status" value="1"/>
</dbReference>
<dbReference type="Gene3D" id="1.10.10.410">
    <property type="match status" value="1"/>
</dbReference>
<dbReference type="Gene3D" id="1.10.150.380">
    <property type="entry name" value="GatB domain, N-terminal subdomain"/>
    <property type="match status" value="1"/>
</dbReference>
<dbReference type="HAMAP" id="MF_00121">
    <property type="entry name" value="GatB"/>
    <property type="match status" value="1"/>
</dbReference>
<dbReference type="InterPro" id="IPR017959">
    <property type="entry name" value="Asn/Gln-tRNA_amidoTrfase_suB/E"/>
</dbReference>
<dbReference type="InterPro" id="IPR006075">
    <property type="entry name" value="Asn/Gln-tRNA_Trfase_suB/E_cat"/>
</dbReference>
<dbReference type="InterPro" id="IPR018027">
    <property type="entry name" value="Asn/Gln_amidotransferase"/>
</dbReference>
<dbReference type="InterPro" id="IPR003789">
    <property type="entry name" value="Asn/Gln_tRNA_amidoTrase-B-like"/>
</dbReference>
<dbReference type="InterPro" id="IPR004413">
    <property type="entry name" value="GatB"/>
</dbReference>
<dbReference type="InterPro" id="IPR042114">
    <property type="entry name" value="GatB_C_1"/>
</dbReference>
<dbReference type="InterPro" id="IPR023168">
    <property type="entry name" value="GatB_Yqey_C_2"/>
</dbReference>
<dbReference type="InterPro" id="IPR017958">
    <property type="entry name" value="Gln-tRNA_amidoTrfase_suB_CS"/>
</dbReference>
<dbReference type="InterPro" id="IPR014746">
    <property type="entry name" value="Gln_synth/guanido_kin_cat_dom"/>
</dbReference>
<dbReference type="NCBIfam" id="TIGR00133">
    <property type="entry name" value="gatB"/>
    <property type="match status" value="1"/>
</dbReference>
<dbReference type="NCBIfam" id="NF004012">
    <property type="entry name" value="PRK05477.1-2"/>
    <property type="match status" value="1"/>
</dbReference>
<dbReference type="NCBIfam" id="NF004014">
    <property type="entry name" value="PRK05477.1-4"/>
    <property type="match status" value="1"/>
</dbReference>
<dbReference type="NCBIfam" id="NF004015">
    <property type="entry name" value="PRK05477.1-5"/>
    <property type="match status" value="1"/>
</dbReference>
<dbReference type="PANTHER" id="PTHR11659">
    <property type="entry name" value="GLUTAMYL-TRNA GLN AMIDOTRANSFERASE SUBUNIT B MITOCHONDRIAL AND PROKARYOTIC PET112-RELATED"/>
    <property type="match status" value="1"/>
</dbReference>
<dbReference type="PANTHER" id="PTHR11659:SF0">
    <property type="entry name" value="GLUTAMYL-TRNA(GLN) AMIDOTRANSFERASE SUBUNIT B, MITOCHONDRIAL"/>
    <property type="match status" value="1"/>
</dbReference>
<dbReference type="Pfam" id="PF02934">
    <property type="entry name" value="GatB_N"/>
    <property type="match status" value="1"/>
</dbReference>
<dbReference type="Pfam" id="PF02637">
    <property type="entry name" value="GatB_Yqey"/>
    <property type="match status" value="1"/>
</dbReference>
<dbReference type="SMART" id="SM00845">
    <property type="entry name" value="GatB_Yqey"/>
    <property type="match status" value="1"/>
</dbReference>
<dbReference type="SUPFAM" id="SSF89095">
    <property type="entry name" value="GatB/YqeY motif"/>
    <property type="match status" value="1"/>
</dbReference>
<dbReference type="SUPFAM" id="SSF55931">
    <property type="entry name" value="Glutamine synthetase/guanido kinase"/>
    <property type="match status" value="1"/>
</dbReference>
<dbReference type="PROSITE" id="PS01234">
    <property type="entry name" value="GATB"/>
    <property type="match status" value="1"/>
</dbReference>
<protein>
    <recommendedName>
        <fullName evidence="1">Aspartyl/glutamyl-tRNA(Asn/Gln) amidotransferase subunit B</fullName>
        <shortName evidence="1">Asp/Glu-ADT subunit B</shortName>
        <ecNumber evidence="1">6.3.5.-</ecNumber>
    </recommendedName>
</protein>
<name>GATB_HALHL</name>
<proteinExistence type="inferred from homology"/>
<organism>
    <name type="scientific">Halorhodospira halophila (strain DSM 244 / SL1)</name>
    <name type="common">Ectothiorhodospira halophila (strain DSM 244 / SL1)</name>
    <dbReference type="NCBI Taxonomy" id="349124"/>
    <lineage>
        <taxon>Bacteria</taxon>
        <taxon>Pseudomonadati</taxon>
        <taxon>Pseudomonadota</taxon>
        <taxon>Gammaproteobacteria</taxon>
        <taxon>Chromatiales</taxon>
        <taxon>Ectothiorhodospiraceae</taxon>
        <taxon>Halorhodospira</taxon>
    </lineage>
</organism>